<reference key="1">
    <citation type="journal article" date="2002" name="Proc. Natl. Acad. Sci. U.S.A.">
        <title>The genome sequence of Bifidobacterium longum reflects its adaptation to the human gastrointestinal tract.</title>
        <authorList>
            <person name="Schell M.A."/>
            <person name="Karmirantzou M."/>
            <person name="Snel B."/>
            <person name="Vilanova D."/>
            <person name="Berger B."/>
            <person name="Pessi G."/>
            <person name="Zwahlen M.-C."/>
            <person name="Desiere F."/>
            <person name="Bork P."/>
            <person name="Delley M."/>
            <person name="Pridmore R.D."/>
            <person name="Arigoni F."/>
        </authorList>
    </citation>
    <scope>NUCLEOTIDE SEQUENCE [LARGE SCALE GENOMIC DNA]</scope>
    <source>
        <strain>NCC 2705</strain>
    </source>
</reference>
<organism>
    <name type="scientific">Bifidobacterium longum (strain NCC 2705)</name>
    <dbReference type="NCBI Taxonomy" id="206672"/>
    <lineage>
        <taxon>Bacteria</taxon>
        <taxon>Bacillati</taxon>
        <taxon>Actinomycetota</taxon>
        <taxon>Actinomycetes</taxon>
        <taxon>Bifidobacteriales</taxon>
        <taxon>Bifidobacteriaceae</taxon>
        <taxon>Bifidobacterium</taxon>
    </lineage>
</organism>
<evidence type="ECO:0000255" key="1">
    <source>
        <dbReference type="HAMAP-Rule" id="MF_01184"/>
    </source>
</evidence>
<dbReference type="EC" id="2.4.2.22" evidence="1"/>
<dbReference type="EMBL" id="AE014295">
    <property type="protein sequence ID" value="AAN24704.1"/>
    <property type="molecule type" value="Genomic_DNA"/>
</dbReference>
<dbReference type="RefSeq" id="NP_696068.1">
    <property type="nucleotide sequence ID" value="NC_004307.2"/>
</dbReference>
<dbReference type="RefSeq" id="WP_007057285.1">
    <property type="nucleotide sequence ID" value="NC_004307.2"/>
</dbReference>
<dbReference type="SMR" id="Q8G5W1"/>
<dbReference type="STRING" id="206672.BL0891"/>
<dbReference type="EnsemblBacteria" id="AAN24704">
    <property type="protein sequence ID" value="AAN24704"/>
    <property type="gene ID" value="BL0891"/>
</dbReference>
<dbReference type="KEGG" id="blo:BL0891"/>
<dbReference type="PATRIC" id="fig|206672.9.peg.588"/>
<dbReference type="HOGENOM" id="CLU_099015_0_0_11"/>
<dbReference type="OrthoDB" id="9790678at2"/>
<dbReference type="PhylomeDB" id="Q8G5W1"/>
<dbReference type="UniPathway" id="UPA00602">
    <property type="reaction ID" value="UER00658"/>
</dbReference>
<dbReference type="Proteomes" id="UP000000439">
    <property type="component" value="Chromosome"/>
</dbReference>
<dbReference type="GO" id="GO:0005737">
    <property type="term" value="C:cytoplasm"/>
    <property type="evidence" value="ECO:0007669"/>
    <property type="project" value="UniProtKB-SubCell"/>
</dbReference>
<dbReference type="GO" id="GO:0000310">
    <property type="term" value="F:xanthine phosphoribosyltransferase activity"/>
    <property type="evidence" value="ECO:0007669"/>
    <property type="project" value="UniProtKB-UniRule"/>
</dbReference>
<dbReference type="GO" id="GO:0006166">
    <property type="term" value="P:purine ribonucleoside salvage"/>
    <property type="evidence" value="ECO:0007669"/>
    <property type="project" value="UniProtKB-KW"/>
</dbReference>
<dbReference type="GO" id="GO:0046110">
    <property type="term" value="P:xanthine metabolic process"/>
    <property type="evidence" value="ECO:0007669"/>
    <property type="project" value="InterPro"/>
</dbReference>
<dbReference type="GO" id="GO:0032265">
    <property type="term" value="P:XMP salvage"/>
    <property type="evidence" value="ECO:0007669"/>
    <property type="project" value="UniProtKB-UniRule"/>
</dbReference>
<dbReference type="CDD" id="cd06223">
    <property type="entry name" value="PRTases_typeI"/>
    <property type="match status" value="1"/>
</dbReference>
<dbReference type="Gene3D" id="3.40.50.2020">
    <property type="match status" value="1"/>
</dbReference>
<dbReference type="HAMAP" id="MF_01184">
    <property type="entry name" value="XPRTase"/>
    <property type="match status" value="1"/>
</dbReference>
<dbReference type="InterPro" id="IPR000836">
    <property type="entry name" value="PRibTrfase_dom"/>
</dbReference>
<dbReference type="InterPro" id="IPR029057">
    <property type="entry name" value="PRTase-like"/>
</dbReference>
<dbReference type="InterPro" id="IPR050118">
    <property type="entry name" value="Pur/Pyrimidine_PRTase"/>
</dbReference>
<dbReference type="InterPro" id="IPR010079">
    <property type="entry name" value="Xanthine_PRibTrfase"/>
</dbReference>
<dbReference type="NCBIfam" id="NF006671">
    <property type="entry name" value="PRK09219.1"/>
    <property type="match status" value="1"/>
</dbReference>
<dbReference type="NCBIfam" id="TIGR01744">
    <property type="entry name" value="XPRTase"/>
    <property type="match status" value="1"/>
</dbReference>
<dbReference type="PANTHER" id="PTHR43864">
    <property type="entry name" value="HYPOXANTHINE/GUANINE PHOSPHORIBOSYLTRANSFERASE"/>
    <property type="match status" value="1"/>
</dbReference>
<dbReference type="PANTHER" id="PTHR43864:SF1">
    <property type="entry name" value="XANTHINE PHOSPHORIBOSYLTRANSFERASE"/>
    <property type="match status" value="1"/>
</dbReference>
<dbReference type="Pfam" id="PF00156">
    <property type="entry name" value="Pribosyltran"/>
    <property type="match status" value="1"/>
</dbReference>
<dbReference type="SUPFAM" id="SSF53271">
    <property type="entry name" value="PRTase-like"/>
    <property type="match status" value="1"/>
</dbReference>
<sequence length="193" mass="20769">MQELEERIQSEGTVKAGNVLKVDAFLNHQCDVRLFDRMGSAWAAHFAGKHITKILTIEASGIGIACVAAQHFGNVPVVFAKKAQSINLDGDQYTTTVYSFTKQKEFPVIVAKKYLNAGDHVLLIDDFLANGKALRGLIDLCEAAGATVEGIGIAVEKGFQGGGDALRAEGYDVDSLAIVESMNPETGEITFRH</sequence>
<name>XPT_BIFLO</name>
<gene>
    <name evidence="1" type="primary">xpt</name>
    <name type="ordered locus">BL0891</name>
</gene>
<keyword id="KW-0963">Cytoplasm</keyword>
<keyword id="KW-0328">Glycosyltransferase</keyword>
<keyword id="KW-0660">Purine salvage</keyword>
<keyword id="KW-1185">Reference proteome</keyword>
<keyword id="KW-0808">Transferase</keyword>
<comment type="function">
    <text evidence="1">Converts the preformed base xanthine, a product of nucleic acid breakdown, to xanthosine 5'-monophosphate (XMP), so it can be reused for RNA or DNA synthesis.</text>
</comment>
<comment type="catalytic activity">
    <reaction evidence="1">
        <text>XMP + diphosphate = xanthine + 5-phospho-alpha-D-ribose 1-diphosphate</text>
        <dbReference type="Rhea" id="RHEA:10800"/>
        <dbReference type="ChEBI" id="CHEBI:17712"/>
        <dbReference type="ChEBI" id="CHEBI:33019"/>
        <dbReference type="ChEBI" id="CHEBI:57464"/>
        <dbReference type="ChEBI" id="CHEBI:58017"/>
        <dbReference type="EC" id="2.4.2.22"/>
    </reaction>
</comment>
<comment type="pathway">
    <text evidence="1">Purine metabolism; XMP biosynthesis via salvage pathway; XMP from xanthine: step 1/1.</text>
</comment>
<comment type="subunit">
    <text evidence="1">Homodimer.</text>
</comment>
<comment type="subcellular location">
    <subcellularLocation>
        <location evidence="1">Cytoplasm</location>
    </subcellularLocation>
</comment>
<comment type="similarity">
    <text evidence="1">Belongs to the purine/pyrimidine phosphoribosyltransferase family. Xpt subfamily.</text>
</comment>
<proteinExistence type="inferred from homology"/>
<protein>
    <recommendedName>
        <fullName evidence="1">Xanthine phosphoribosyltransferase</fullName>
        <shortName evidence="1">XPRTase</shortName>
        <ecNumber evidence="1">2.4.2.22</ecNumber>
    </recommendedName>
</protein>
<feature type="chain" id="PRO_0000339675" description="Xanthine phosphoribosyltransferase">
    <location>
        <begin position="1"/>
        <end position="193"/>
    </location>
</feature>
<feature type="binding site" evidence="1">
    <location>
        <position position="20"/>
    </location>
    <ligand>
        <name>xanthine</name>
        <dbReference type="ChEBI" id="CHEBI:17712"/>
    </ligand>
</feature>
<feature type="binding site" evidence="1">
    <location>
        <position position="27"/>
    </location>
    <ligand>
        <name>xanthine</name>
        <dbReference type="ChEBI" id="CHEBI:17712"/>
    </ligand>
</feature>
<feature type="binding site" evidence="1">
    <location>
        <begin position="129"/>
        <end position="133"/>
    </location>
    <ligand>
        <name>5-phospho-alpha-D-ribose 1-diphosphate</name>
        <dbReference type="ChEBI" id="CHEBI:58017"/>
    </ligand>
</feature>
<feature type="binding site" evidence="1">
    <location>
        <position position="157"/>
    </location>
    <ligand>
        <name>xanthine</name>
        <dbReference type="ChEBI" id="CHEBI:17712"/>
    </ligand>
</feature>
<accession>Q8G5W1</accession>